<organism>
    <name type="scientific">Mus musculus</name>
    <name type="common">Mouse</name>
    <dbReference type="NCBI Taxonomy" id="10090"/>
    <lineage>
        <taxon>Eukaryota</taxon>
        <taxon>Metazoa</taxon>
        <taxon>Chordata</taxon>
        <taxon>Craniata</taxon>
        <taxon>Vertebrata</taxon>
        <taxon>Euteleostomi</taxon>
        <taxon>Mammalia</taxon>
        <taxon>Eutheria</taxon>
        <taxon>Euarchontoglires</taxon>
        <taxon>Glires</taxon>
        <taxon>Rodentia</taxon>
        <taxon>Myomorpha</taxon>
        <taxon>Muroidea</taxon>
        <taxon>Muridae</taxon>
        <taxon>Murinae</taxon>
        <taxon>Mus</taxon>
        <taxon>Mus</taxon>
    </lineage>
</organism>
<name>MLXPL_MOUSE</name>
<accession>Q99MZ3</accession>
<accession>Q99MY9</accession>
<accession>Q99MZ0</accession>
<accession>Q99MZ1</accession>
<accession>Q99MZ2</accession>
<accession>Q9JLM5</accession>
<sequence>MARALADLSVNLQVPRVVPSPDSDSDTDLEDPSPRRSAGGLHRSQVIHSGHFMVSSPHSDSLTRRRDQEGPVGLADFGPRSIDPTLTHLFECLSLAYSGKLVSPKWKNFKGLKLLCRDKIRLNNAIWRAWYIQYVQRRKSPVCGFVTPLQGSEADEHRKPEAVILEGNYWKRRIEVVMREYHKWRIYYKKRLRKSSREGDFLAPKQVEGGWPPPERWCEQLFSSVVPVLLGGSEEEPGGRQLLDLDCFLSDISDTLFTMTQPSPSSLQLPPEDAYVGNADMIQPDLTPLQPSLDDFMEISDFFTNYRPPQTPTSSNYIESPSFGPMADSLFSSGILAPEMPSPASSSSSSGMTPHSGNTRLQARNSCSGPLDPNPFLSSEFLLPEDPKTKIPPAPGPTPLLPFPTPVKVHGLEPCTPSPFPTMAPPPSLLPEESLLSARFPFTSAPPAPGVSTLPAPTTFVPTPQPGPGPVPFSVDHLPHGYLEPVFGPHFTVPQGMQPRCKPSSPSPGGQKASPPTLASATASPTATATARDNNPCLTQLLRAAKPEQALEPPTMPGTLLRPPESPQDTVSEIPRARAFFPPIPAPTPPRPPPGPATLAPPRSLVVPKAERLSPPASSGSERRLSGDLNSIQPSGALSVHLSPPQTVLSRGRVDNNKMENRRITHISAEQKRRFNIKLGFDTLHGLVSTLSAQPSLKVSKATTLQKTAEYILMLQQERAAMQEEAQQLRDEIEELNAAINLCQQQLPATGVPITHQRFDQMRDMFDDYVRTRTLHNWKFWVFSILIRPLFESFNGMVSTASLHSLRQTSLAWLEQYCSLPALRPTVLNSLRQLSTSTSILTDPSLVPEQATRAVTEGTLGRPL</sequence>
<feature type="chain" id="PRO_0000127505" description="Carbohydrate-responsive element-binding protein">
    <location>
        <begin position="1"/>
        <end position="864"/>
    </location>
</feature>
<feature type="domain" description="bHLH" evidence="4">
    <location>
        <begin position="661"/>
        <end position="715"/>
    </location>
</feature>
<feature type="region of interest" description="Disordered" evidence="5">
    <location>
        <begin position="15"/>
        <end position="41"/>
    </location>
</feature>
<feature type="region of interest" description="Disordered" evidence="5">
    <location>
        <begin position="53"/>
        <end position="77"/>
    </location>
</feature>
<feature type="region of interest" description="Disordered" evidence="5">
    <location>
        <begin position="332"/>
        <end position="397"/>
    </location>
</feature>
<feature type="region of interest" description="Disordered" evidence="5">
    <location>
        <begin position="449"/>
        <end position="468"/>
    </location>
</feature>
<feature type="region of interest" description="Disordered" evidence="5">
    <location>
        <begin position="489"/>
        <end position="533"/>
    </location>
</feature>
<feature type="region of interest" description="Disordered" evidence="5">
    <location>
        <begin position="547"/>
        <end position="570"/>
    </location>
</feature>
<feature type="region of interest" description="Disordered" evidence="5">
    <location>
        <begin position="583"/>
        <end position="602"/>
    </location>
</feature>
<feature type="region of interest" description="Leucine-zipper">
    <location>
        <begin position="715"/>
        <end position="736"/>
    </location>
</feature>
<feature type="compositionally biased region" description="Polar residues" evidence="5">
    <location>
        <begin position="351"/>
        <end position="368"/>
    </location>
</feature>
<feature type="compositionally biased region" description="Low complexity" evidence="5">
    <location>
        <begin position="513"/>
        <end position="531"/>
    </location>
</feature>
<feature type="compositionally biased region" description="Pro residues" evidence="5">
    <location>
        <begin position="583"/>
        <end position="596"/>
    </location>
</feature>
<feature type="modified residue" description="Phosphoserine" evidence="9">
    <location>
        <position position="20"/>
    </location>
</feature>
<feature type="modified residue" description="Phosphoserine" evidence="7 8 9">
    <location>
        <position position="23"/>
    </location>
</feature>
<feature type="modified residue" description="Phosphoserine" evidence="7 8 9">
    <location>
        <position position="25"/>
    </location>
</feature>
<feature type="modified residue" description="Phosphothreonine" evidence="8">
    <location>
        <position position="27"/>
    </location>
</feature>
<feature type="modified residue" description="Phosphoserine" evidence="3">
    <location>
        <position position="196"/>
    </location>
</feature>
<feature type="modified residue" description="Phosphoserine; by AMPK" evidence="2">
    <location>
        <position position="566"/>
    </location>
</feature>
<feature type="modified residue" description="Phosphoserine" evidence="3">
    <location>
        <position position="614"/>
    </location>
</feature>
<feature type="modified residue" description="Phosphoserine" evidence="9">
    <location>
        <position position="626"/>
    </location>
</feature>
<feature type="modified residue" description="Phosphoserine" evidence="9">
    <location>
        <position position="643"/>
    </location>
</feature>
<feature type="splice variant" id="VSP_002174" description="In isoform 2." evidence="6">
    <location>
        <begin position="58"/>
        <end position="79"/>
    </location>
</feature>
<feature type="splice variant" id="VSP_002175" description="In isoform 5." evidence="6">
    <original>AKPEQALEPPTM</original>
    <variation>VVLIVLPVPSQA</variation>
    <location>
        <begin position="545"/>
        <end position="556"/>
    </location>
</feature>
<feature type="splice variant" id="VSP_002176" description="In isoform 5." evidence="6">
    <location>
        <begin position="557"/>
        <end position="864"/>
    </location>
</feature>
<feature type="splice variant" id="VSP_002177" description="In isoform 3." evidence="6">
    <original>VSKATTLQKTAEYILMLQQERAAMQEEAQQLRDEIEELNAAINLCQ</original>
    <variation>GLPTQRPTLVALAGEQSNHASEDSGVHPDAAAGTGSYAGGGAAAAG</variation>
    <location>
        <begin position="699"/>
        <end position="744"/>
    </location>
</feature>
<feature type="splice variant" id="VSP_002179" description="In isoform 4." evidence="6">
    <original>VSKATTLQKTAEYILM</original>
    <variation>LPGLANTEAHIGGARR</variation>
    <location>
        <begin position="699"/>
        <end position="714"/>
    </location>
</feature>
<feature type="splice variant" id="VSP_002180" description="In isoform 4." evidence="6">
    <location>
        <begin position="715"/>
        <end position="864"/>
    </location>
</feature>
<feature type="splice variant" id="VSP_002178" description="In isoform 3." evidence="6">
    <location>
        <begin position="745"/>
        <end position="864"/>
    </location>
</feature>
<feature type="sequence conflict" description="In Ref. 2; AAF68175." evidence="6" ref="2">
    <original>D</original>
    <variation>Y</variation>
    <location>
        <position position="67"/>
    </location>
</feature>
<feature type="sequence conflict" description="In Ref. 2; AAF68175." evidence="6" ref="2">
    <original>K</original>
    <variation>N</variation>
    <location>
        <position position="107"/>
    </location>
</feature>
<feature type="sequence conflict" description="In Ref. 2; AAF68175." evidence="6" ref="2">
    <original>R</original>
    <variation>I</variation>
    <location>
        <position position="128"/>
    </location>
</feature>
<feature type="sequence conflict" description="In Ref. 2; AAF68175." evidence="6" ref="2">
    <original>RK</original>
    <variation>TR</variation>
    <location>
        <begin position="138"/>
        <end position="139"/>
    </location>
</feature>
<feature type="sequence conflict" description="In Ref. 2; AAF68175." evidence="6" ref="2">
    <original>D</original>
    <variation>H</variation>
    <location>
        <position position="155"/>
    </location>
</feature>
<feature type="sequence conflict" description="In Ref. 2; AAF68175." evidence="6" ref="2">
    <original>E</original>
    <variation>D</variation>
    <location>
        <position position="175"/>
    </location>
</feature>
<feature type="sequence conflict" description="In Ref. 2; AAF68175." evidence="6" ref="2">
    <original>K</original>
    <variation>V</variation>
    <location>
        <position position="183"/>
    </location>
</feature>
<feature type="sequence conflict" description="In Ref. 2; AAF68175." evidence="6" ref="2">
    <original>QQ</original>
    <variation>HE</variation>
    <location>
        <begin position="727"/>
        <end position="728"/>
    </location>
</feature>
<feature type="helix" evidence="10">
    <location>
        <begin position="118"/>
        <end position="134"/>
    </location>
</feature>
<evidence type="ECO:0000250" key="1"/>
<evidence type="ECO:0000250" key="2">
    <source>
        <dbReference type="UniProtKB" id="Q8VIP2"/>
    </source>
</evidence>
<evidence type="ECO:0000250" key="3">
    <source>
        <dbReference type="UniProtKB" id="Q9NP71"/>
    </source>
</evidence>
<evidence type="ECO:0000255" key="4">
    <source>
        <dbReference type="PROSITE-ProRule" id="PRU00981"/>
    </source>
</evidence>
<evidence type="ECO:0000256" key="5">
    <source>
        <dbReference type="SAM" id="MobiDB-lite"/>
    </source>
</evidence>
<evidence type="ECO:0000305" key="6"/>
<evidence type="ECO:0007744" key="7">
    <source>
    </source>
</evidence>
<evidence type="ECO:0007744" key="8">
    <source>
    </source>
</evidence>
<evidence type="ECO:0007744" key="9">
    <source>
    </source>
</evidence>
<evidence type="ECO:0007829" key="10">
    <source>
        <dbReference type="PDB" id="4GNT"/>
    </source>
</evidence>
<proteinExistence type="evidence at protein level"/>
<gene>
    <name type="primary">Mlxipl</name>
    <name type="synonym">Mio</name>
    <name type="synonym">Wbscr14</name>
</gene>
<reference key="1">
    <citation type="journal article" date="2001" name="Hum. Mol. Genet.">
        <title>WBSCR14, a gene mapping to the Williams-Beuren syndrome deleted region, is a new member of the Mlx transcription factor network.</title>
        <authorList>
            <person name="Cairo S."/>
            <person name="Merla G."/>
            <person name="Urbinati F."/>
            <person name="Ballabio A."/>
            <person name="Reymond A."/>
        </authorList>
    </citation>
    <scope>NUCLEOTIDE SEQUENCE [MRNA]</scope>
    <scope>CHARACTERIZATION</scope>
    <scope>ALTERNATIVE SPLICING</scope>
</reference>
<reference key="2">
    <citation type="journal article" date="2000" name="Eur. J. Hum. Genet.">
        <title>WBSCR14, a putative transcription factor gene deleted in Williams-Beuren syndrome: complete characterisation of the human gene and the mouse ortholog.</title>
        <authorList>
            <person name="de Luis O."/>
            <person name="Valero M.C."/>
            <person name="Perez Jurado L.A."/>
        </authorList>
    </citation>
    <scope>NUCLEOTIDE SEQUENCE [MRNA]</scope>
</reference>
<reference key="3">
    <citation type="journal article" date="2007" name="Proc. Natl. Acad. Sci. U.S.A.">
        <title>Large-scale phosphorylation analysis of mouse liver.</title>
        <authorList>
            <person name="Villen J."/>
            <person name="Beausoleil S.A."/>
            <person name="Gerber S.A."/>
            <person name="Gygi S.P."/>
        </authorList>
    </citation>
    <scope>PHOSPHORYLATION [LARGE SCALE ANALYSIS] AT SER-23 AND SER-25</scope>
    <scope>IDENTIFICATION BY MASS SPECTROMETRY [LARGE SCALE ANALYSIS]</scope>
    <source>
        <tissue>Liver</tissue>
    </source>
</reference>
<reference key="4">
    <citation type="journal article" date="2008" name="J. Proteome Res.">
        <title>Specific phosphopeptide enrichment with immobilized titanium ion affinity chromatography adsorbent for phosphoproteome analysis.</title>
        <authorList>
            <person name="Zhou H."/>
            <person name="Ye M."/>
            <person name="Dong J."/>
            <person name="Han G."/>
            <person name="Jiang X."/>
            <person name="Wu R."/>
            <person name="Zou H."/>
        </authorList>
    </citation>
    <scope>PHOSPHORYLATION [LARGE SCALE ANALYSIS] AT SER-23; SER-25 AND THR-27</scope>
    <scope>IDENTIFICATION BY MASS SPECTROMETRY [LARGE SCALE ANALYSIS]</scope>
    <source>
        <tissue>Liver</tissue>
    </source>
</reference>
<reference key="5">
    <citation type="journal article" date="2010" name="Cell">
        <title>A tissue-specific atlas of mouse protein phosphorylation and expression.</title>
        <authorList>
            <person name="Huttlin E.L."/>
            <person name="Jedrychowski M.P."/>
            <person name="Elias J.E."/>
            <person name="Goswami T."/>
            <person name="Rad R."/>
            <person name="Beausoleil S.A."/>
            <person name="Villen J."/>
            <person name="Haas W."/>
            <person name="Sowa M.E."/>
            <person name="Gygi S.P."/>
        </authorList>
    </citation>
    <scope>PHOSPHORYLATION [LARGE SCALE ANALYSIS] AT SER-20; SER-23; SER-25; SER-626 AND SER-643</scope>
    <scope>IDENTIFICATION BY MASS SPECTROMETRY [LARGE SCALE ANALYSIS]</scope>
    <source>
        <tissue>Brown adipose tissue</tissue>
        <tissue>Kidney</tissue>
        <tissue>Liver</tissue>
        <tissue>Testis</tissue>
    </source>
</reference>
<protein>
    <recommendedName>
        <fullName>Carbohydrate-responsive element-binding protein</fullName>
        <shortName>ChREBP</shortName>
    </recommendedName>
    <alternativeName>
        <fullName>MLX interactor</fullName>
    </alternativeName>
    <alternativeName>
        <fullName>MLX-interacting protein-like</fullName>
    </alternativeName>
    <alternativeName>
        <fullName>Williams-Beuren syndrome chromosomal region 14 protein homolog</fullName>
    </alternativeName>
</protein>
<comment type="function">
    <text>Transcriptional repressor. Binds to the canonical and non-canonical E box sequences 5'-CACGTG-3'.</text>
</comment>
<comment type="subunit">
    <text>Binds DNA as a heterodimer with TCFL4/MLX.</text>
</comment>
<comment type="subcellular location">
    <subcellularLocation>
        <location evidence="4">Nucleus</location>
    </subcellularLocation>
</comment>
<comment type="alternative products">
    <event type="alternative splicing"/>
    <isoform>
        <id>Q99MZ3-1</id>
        <name>1</name>
        <name>Zeta</name>
        <sequence type="displayed"/>
    </isoform>
    <isoform>
        <id>Q99MZ3-2</id>
        <name>2</name>
        <name>Theta</name>
        <sequence type="described" ref="VSP_002174"/>
    </isoform>
    <isoform>
        <id>Q99MZ3-3</id>
        <name>3</name>
        <name>Iota</name>
        <sequence type="described" ref="VSP_002177 VSP_002178"/>
    </isoform>
    <isoform>
        <id>Q99MZ3-4</id>
        <name>4</name>
        <name>Kappa</name>
        <sequence type="described" ref="VSP_002179 VSP_002180"/>
    </isoform>
    <isoform>
        <id>Q99MZ3-5</id>
        <name>5</name>
        <name>Eta</name>
        <sequence type="described" ref="VSP_002175 VSP_002176"/>
    </isoform>
</comment>
<comment type="tissue specificity">
    <text>Expressed in the ventricular and intermediate zones of the developing spinal cord of 12.5 dpc embryos. In later embryos expressed in a variety of tissues.</text>
</comment>
<comment type="PTM">
    <text evidence="1">Phosphorylation at Ser-566 by AMPK inactivates the DNA-binding activity.</text>
</comment>
<keyword id="KW-0002">3D-structure</keyword>
<keyword id="KW-0025">Alternative splicing</keyword>
<keyword id="KW-0238">DNA-binding</keyword>
<keyword id="KW-0539">Nucleus</keyword>
<keyword id="KW-0597">Phosphoprotein</keyword>
<keyword id="KW-1185">Reference proteome</keyword>
<keyword id="KW-0678">Repressor</keyword>
<keyword id="KW-0804">Transcription</keyword>
<keyword id="KW-0805">Transcription regulation</keyword>
<dbReference type="EMBL" id="AF245475">
    <property type="protein sequence ID" value="AAK20940.1"/>
    <property type="molecule type" value="mRNA"/>
</dbReference>
<dbReference type="EMBL" id="AF245476">
    <property type="protein sequence ID" value="AAK20941.1"/>
    <property type="molecule type" value="mRNA"/>
</dbReference>
<dbReference type="EMBL" id="AF245477">
    <property type="protein sequence ID" value="AAK20942.1"/>
    <property type="molecule type" value="mRNA"/>
</dbReference>
<dbReference type="EMBL" id="AF245478">
    <property type="protein sequence ID" value="AAK20943.1"/>
    <property type="molecule type" value="mRNA"/>
</dbReference>
<dbReference type="EMBL" id="AF245479">
    <property type="protein sequence ID" value="AAK20944.1"/>
    <property type="molecule type" value="mRNA"/>
</dbReference>
<dbReference type="EMBL" id="AF156604">
    <property type="protein sequence ID" value="AAF68175.1"/>
    <property type="molecule type" value="mRNA"/>
</dbReference>
<dbReference type="CCDS" id="CCDS39316.1">
    <molecule id="Q99MZ3-1"/>
</dbReference>
<dbReference type="RefSeq" id="NP_067430.2">
    <molecule id="Q99MZ3-1"/>
    <property type="nucleotide sequence ID" value="NM_021455.4"/>
</dbReference>
<dbReference type="PDB" id="4GNT">
    <property type="method" value="X-ray"/>
    <property type="resolution" value="2.41 A"/>
    <property type="chains" value="B=117-137"/>
</dbReference>
<dbReference type="PDBsum" id="4GNT"/>
<dbReference type="SMR" id="Q99MZ3"/>
<dbReference type="BioGRID" id="208443">
    <property type="interactions" value="7"/>
</dbReference>
<dbReference type="FunCoup" id="Q99MZ3">
    <property type="interactions" value="1412"/>
</dbReference>
<dbReference type="STRING" id="10090.ENSMUSP00000005507"/>
<dbReference type="GlyGen" id="Q99MZ3">
    <property type="glycosylation" value="6 sites, 1 O-linked glycan (3 sites)"/>
</dbReference>
<dbReference type="iPTMnet" id="Q99MZ3"/>
<dbReference type="PhosphoSitePlus" id="Q99MZ3"/>
<dbReference type="PaxDb" id="10090-ENSMUSP00000005507"/>
<dbReference type="PeptideAtlas" id="Q99MZ3"/>
<dbReference type="ProteomicsDB" id="290086">
    <molecule id="Q99MZ3-1"/>
</dbReference>
<dbReference type="ProteomicsDB" id="290087">
    <molecule id="Q99MZ3-2"/>
</dbReference>
<dbReference type="ProteomicsDB" id="290088">
    <molecule id="Q99MZ3-3"/>
</dbReference>
<dbReference type="ProteomicsDB" id="290089">
    <molecule id="Q99MZ3-4"/>
</dbReference>
<dbReference type="ProteomicsDB" id="290090">
    <molecule id="Q99MZ3-5"/>
</dbReference>
<dbReference type="Antibodypedia" id="14346">
    <property type="antibodies" value="348 antibodies from 30 providers"/>
</dbReference>
<dbReference type="DNASU" id="58805"/>
<dbReference type="Ensembl" id="ENSMUST00000005507.10">
    <molecule id="Q99MZ3-1"/>
    <property type="protein sequence ID" value="ENSMUSP00000005507.4"/>
    <property type="gene ID" value="ENSMUSG00000005373.14"/>
</dbReference>
<dbReference type="Ensembl" id="ENSMUST00000128691.8">
    <molecule id="Q99MZ3-4"/>
    <property type="protein sequence ID" value="ENSMUSP00000121348.2"/>
    <property type="gene ID" value="ENSMUSG00000005373.14"/>
</dbReference>
<dbReference type="Ensembl" id="ENSMUST00000129008.5">
    <molecule id="Q99MZ3-5"/>
    <property type="protein sequence ID" value="ENSMUSP00000114933.2"/>
    <property type="gene ID" value="ENSMUSG00000005373.14"/>
</dbReference>
<dbReference type="Ensembl" id="ENSMUST00000153519.8">
    <molecule id="Q99MZ3-3"/>
    <property type="protein sequence ID" value="ENSMUSP00000122198.2"/>
    <property type="gene ID" value="ENSMUSG00000005373.14"/>
</dbReference>
<dbReference type="GeneID" id="58805"/>
<dbReference type="KEGG" id="mmu:58805"/>
<dbReference type="UCSC" id="uc008zxt.2">
    <molecule id="Q99MZ3-1"/>
    <property type="organism name" value="mouse"/>
</dbReference>
<dbReference type="AGR" id="MGI:1927999"/>
<dbReference type="CTD" id="51085"/>
<dbReference type="MGI" id="MGI:1927999">
    <property type="gene designation" value="Mlxipl"/>
</dbReference>
<dbReference type="VEuPathDB" id="HostDB:ENSMUSG00000005373"/>
<dbReference type="eggNOG" id="KOG3582">
    <property type="taxonomic scope" value="Eukaryota"/>
</dbReference>
<dbReference type="GeneTree" id="ENSGT00940000159210"/>
<dbReference type="HOGENOM" id="CLU_007471_1_0_1"/>
<dbReference type="InParanoid" id="Q99MZ3"/>
<dbReference type="OMA" id="WTSDRHN"/>
<dbReference type="OrthoDB" id="6022628at2759"/>
<dbReference type="PhylomeDB" id="Q99MZ3"/>
<dbReference type="TreeFam" id="TF324749"/>
<dbReference type="BioGRID-ORCS" id="58805">
    <property type="hits" value="6 hits in 80 CRISPR screens"/>
</dbReference>
<dbReference type="ChiTaRS" id="Mlxipl">
    <property type="organism name" value="mouse"/>
</dbReference>
<dbReference type="EvolutionaryTrace" id="Q99MZ3"/>
<dbReference type="PRO" id="PR:Q99MZ3"/>
<dbReference type="Proteomes" id="UP000000589">
    <property type="component" value="Chromosome 5"/>
</dbReference>
<dbReference type="RNAct" id="Q99MZ3">
    <property type="molecule type" value="protein"/>
</dbReference>
<dbReference type="Bgee" id="ENSMUSG00000005373">
    <property type="expression patterns" value="Expressed in crypt of Lieberkuhn of small intestine and 127 other cell types or tissues"/>
</dbReference>
<dbReference type="ExpressionAtlas" id="Q99MZ3">
    <property type="expression patterns" value="baseline and differential"/>
</dbReference>
<dbReference type="GO" id="GO:0000785">
    <property type="term" value="C:chromatin"/>
    <property type="evidence" value="ECO:0007669"/>
    <property type="project" value="Ensembl"/>
</dbReference>
<dbReference type="GO" id="GO:0005737">
    <property type="term" value="C:cytoplasm"/>
    <property type="evidence" value="ECO:0000314"/>
    <property type="project" value="BHF-UCL"/>
</dbReference>
<dbReference type="GO" id="GO:0005829">
    <property type="term" value="C:cytosol"/>
    <property type="evidence" value="ECO:0000304"/>
    <property type="project" value="Reactome"/>
</dbReference>
<dbReference type="GO" id="GO:0005654">
    <property type="term" value="C:nucleoplasm"/>
    <property type="evidence" value="ECO:0000314"/>
    <property type="project" value="MGI"/>
</dbReference>
<dbReference type="GO" id="GO:0005634">
    <property type="term" value="C:nucleus"/>
    <property type="evidence" value="ECO:0000314"/>
    <property type="project" value="BHF-UCL"/>
</dbReference>
<dbReference type="GO" id="GO:0005667">
    <property type="term" value="C:transcription regulator complex"/>
    <property type="evidence" value="ECO:0000314"/>
    <property type="project" value="MGI"/>
</dbReference>
<dbReference type="GO" id="GO:0035538">
    <property type="term" value="F:carbohydrate response element binding"/>
    <property type="evidence" value="ECO:0000304"/>
    <property type="project" value="BHF-UCL"/>
</dbReference>
<dbReference type="GO" id="GO:0001228">
    <property type="term" value="F:DNA-binding transcription activator activity, RNA polymerase II-specific"/>
    <property type="evidence" value="ECO:0000314"/>
    <property type="project" value="MGI"/>
</dbReference>
<dbReference type="GO" id="GO:0000981">
    <property type="term" value="F:DNA-binding transcription factor activity, RNA polymerase II-specific"/>
    <property type="evidence" value="ECO:0000314"/>
    <property type="project" value="MGI"/>
</dbReference>
<dbReference type="GO" id="GO:0001227">
    <property type="term" value="F:DNA-binding transcription repressor activity, RNA polymerase II-specific"/>
    <property type="evidence" value="ECO:0000314"/>
    <property type="project" value="NTNU_SB"/>
</dbReference>
<dbReference type="GO" id="GO:0046982">
    <property type="term" value="F:protein heterodimerization activity"/>
    <property type="evidence" value="ECO:0007669"/>
    <property type="project" value="Ensembl"/>
</dbReference>
<dbReference type="GO" id="GO:0000978">
    <property type="term" value="F:RNA polymerase II cis-regulatory region sequence-specific DNA binding"/>
    <property type="evidence" value="ECO:0000314"/>
    <property type="project" value="NTNU_SB"/>
</dbReference>
<dbReference type="GO" id="GO:0061629">
    <property type="term" value="F:RNA polymerase II-specific DNA-binding transcription factor binding"/>
    <property type="evidence" value="ECO:0000314"/>
    <property type="project" value="BHF-UCL"/>
</dbReference>
<dbReference type="GO" id="GO:0097009">
    <property type="term" value="P:energy homeostasis"/>
    <property type="evidence" value="ECO:0000250"/>
    <property type="project" value="UniProtKB"/>
</dbReference>
<dbReference type="GO" id="GO:0055089">
    <property type="term" value="P:fatty acid homeostasis"/>
    <property type="evidence" value="ECO:0000250"/>
    <property type="project" value="UniProtKB"/>
</dbReference>
<dbReference type="GO" id="GO:0042593">
    <property type="term" value="P:glucose homeostasis"/>
    <property type="evidence" value="ECO:0000315"/>
    <property type="project" value="BHF-UCL"/>
</dbReference>
<dbReference type="GO" id="GO:0010255">
    <property type="term" value="P:glucose mediated signaling pathway"/>
    <property type="evidence" value="ECO:0000314"/>
    <property type="project" value="BHF-UCL"/>
</dbReference>
<dbReference type="GO" id="GO:0008610">
    <property type="term" value="P:lipid biosynthetic process"/>
    <property type="evidence" value="ECO:0007669"/>
    <property type="project" value="Ensembl"/>
</dbReference>
<dbReference type="GO" id="GO:0045892">
    <property type="term" value="P:negative regulation of DNA-templated transcription"/>
    <property type="evidence" value="ECO:0000314"/>
    <property type="project" value="BHF-UCL"/>
</dbReference>
<dbReference type="GO" id="GO:0090324">
    <property type="term" value="P:negative regulation of oxidative phosphorylation"/>
    <property type="evidence" value="ECO:0007669"/>
    <property type="project" value="Ensembl"/>
</dbReference>
<dbReference type="GO" id="GO:1901797">
    <property type="term" value="P:negative regulation of signal transduction by p53 class mediator"/>
    <property type="evidence" value="ECO:0007669"/>
    <property type="project" value="Ensembl"/>
</dbReference>
<dbReference type="GO" id="GO:0000122">
    <property type="term" value="P:negative regulation of transcription by RNA polymerase II"/>
    <property type="evidence" value="ECO:0000314"/>
    <property type="project" value="MGI"/>
</dbReference>
<dbReference type="GO" id="GO:0008284">
    <property type="term" value="P:positive regulation of cell population proliferation"/>
    <property type="evidence" value="ECO:0007669"/>
    <property type="project" value="Ensembl"/>
</dbReference>
<dbReference type="GO" id="GO:0045893">
    <property type="term" value="P:positive regulation of DNA-templated transcription"/>
    <property type="evidence" value="ECO:0000314"/>
    <property type="project" value="BHF-UCL"/>
</dbReference>
<dbReference type="GO" id="GO:0045723">
    <property type="term" value="P:positive regulation of fatty acid biosynthetic process"/>
    <property type="evidence" value="ECO:0000315"/>
    <property type="project" value="BHF-UCL"/>
</dbReference>
<dbReference type="GO" id="GO:0045821">
    <property type="term" value="P:positive regulation of glycolytic process"/>
    <property type="evidence" value="ECO:0000314"/>
    <property type="project" value="MGI"/>
</dbReference>
<dbReference type="GO" id="GO:0035774">
    <property type="term" value="P:positive regulation of insulin secretion involved in cellular response to glucose stimulus"/>
    <property type="evidence" value="ECO:0000316"/>
    <property type="project" value="BHF-UCL"/>
</dbReference>
<dbReference type="GO" id="GO:0046889">
    <property type="term" value="P:positive regulation of lipid biosynthetic process"/>
    <property type="evidence" value="ECO:0000315"/>
    <property type="project" value="MGI"/>
</dbReference>
<dbReference type="GO" id="GO:0045944">
    <property type="term" value="P:positive regulation of transcription by RNA polymerase II"/>
    <property type="evidence" value="ECO:0000314"/>
    <property type="project" value="MGI"/>
</dbReference>
<dbReference type="GO" id="GO:0000432">
    <property type="term" value="P:positive regulation of transcription from RNA polymerase II promoter by glucose"/>
    <property type="evidence" value="ECO:0000314"/>
    <property type="project" value="MGI"/>
</dbReference>
<dbReference type="CDD" id="cd19689">
    <property type="entry name" value="bHLHzip_MLXIPL"/>
    <property type="match status" value="1"/>
</dbReference>
<dbReference type="CDD" id="cd21771">
    <property type="entry name" value="NES2-NLS_ChREBP"/>
    <property type="match status" value="1"/>
</dbReference>
<dbReference type="FunFam" id="4.10.280.10:FF:000028">
    <property type="entry name" value="MLX interacting protein like"/>
    <property type="match status" value="1"/>
</dbReference>
<dbReference type="Gene3D" id="4.10.280.10">
    <property type="entry name" value="Helix-loop-helix DNA-binding domain"/>
    <property type="match status" value="1"/>
</dbReference>
<dbReference type="InterPro" id="IPR011598">
    <property type="entry name" value="bHLH_dom"/>
</dbReference>
<dbReference type="InterPro" id="IPR036638">
    <property type="entry name" value="HLH_DNA-bd_sf"/>
</dbReference>
<dbReference type="InterPro" id="IPR052207">
    <property type="entry name" value="Max-like/E-box_TFs"/>
</dbReference>
<dbReference type="PANTHER" id="PTHR15741">
    <property type="entry name" value="BASIC HELIX-LOOP-HELIX ZIP TRANSCRIPTION FACTOR"/>
    <property type="match status" value="1"/>
</dbReference>
<dbReference type="PANTHER" id="PTHR15741:SF14">
    <property type="entry name" value="CARBOHYDRATE-RESPONSIVE ELEMENT-BINDING PROTEIN"/>
    <property type="match status" value="1"/>
</dbReference>
<dbReference type="Pfam" id="PF00010">
    <property type="entry name" value="HLH"/>
    <property type="match status" value="1"/>
</dbReference>
<dbReference type="SMART" id="SM00353">
    <property type="entry name" value="HLH"/>
    <property type="match status" value="1"/>
</dbReference>
<dbReference type="SUPFAM" id="SSF47459">
    <property type="entry name" value="HLH, helix-loop-helix DNA-binding domain"/>
    <property type="match status" value="1"/>
</dbReference>
<dbReference type="PROSITE" id="PS50888">
    <property type="entry name" value="BHLH"/>
    <property type="match status" value="1"/>
</dbReference>